<feature type="chain" id="PRO_1000078753" description="Nucleoid-associated protein CPS_3743">
    <location>
        <begin position="1"/>
        <end position="108"/>
    </location>
</feature>
<feature type="region of interest" description="Disordered" evidence="2">
    <location>
        <begin position="87"/>
        <end position="108"/>
    </location>
</feature>
<sequence length="108" mass="11718">MMKGGMGNLMKQAQQMQAKMAKAQEELAQMEVVGEAGAGMVKVTMTGSHSVRKVELDDSLMEDDKDMIEDLLAAAVNDAVRRVEEQNKDKMGALTGGMQLPPGMKMPF</sequence>
<accession>Q47XR0</accession>
<proteinExistence type="inferred from homology"/>
<reference key="1">
    <citation type="journal article" date="2005" name="Proc. Natl. Acad. Sci. U.S.A.">
        <title>The psychrophilic lifestyle as revealed by the genome sequence of Colwellia psychrerythraea 34H through genomic and proteomic analyses.</title>
        <authorList>
            <person name="Methe B.A."/>
            <person name="Nelson K.E."/>
            <person name="Deming J.W."/>
            <person name="Momen B."/>
            <person name="Melamud E."/>
            <person name="Zhang X."/>
            <person name="Moult J."/>
            <person name="Madupu R."/>
            <person name="Nelson W.C."/>
            <person name="Dodson R.J."/>
            <person name="Brinkac L.M."/>
            <person name="Daugherty S.C."/>
            <person name="Durkin A.S."/>
            <person name="DeBoy R.T."/>
            <person name="Kolonay J.F."/>
            <person name="Sullivan S.A."/>
            <person name="Zhou L."/>
            <person name="Davidsen T.M."/>
            <person name="Wu M."/>
            <person name="Huston A.L."/>
            <person name="Lewis M."/>
            <person name="Weaver B."/>
            <person name="Weidman J.F."/>
            <person name="Khouri H."/>
            <person name="Utterback T.R."/>
            <person name="Feldblyum T.V."/>
            <person name="Fraser C.M."/>
        </authorList>
    </citation>
    <scope>NUCLEOTIDE SEQUENCE [LARGE SCALE GENOMIC DNA]</scope>
    <source>
        <strain>34H / ATCC BAA-681</strain>
    </source>
</reference>
<comment type="function">
    <text evidence="1">Binds to DNA and alters its conformation. May be involved in regulation of gene expression, nucleoid organization and DNA protection.</text>
</comment>
<comment type="subunit">
    <text evidence="1">Homodimer.</text>
</comment>
<comment type="subcellular location">
    <subcellularLocation>
        <location evidence="1">Cytoplasm</location>
        <location evidence="1">Nucleoid</location>
    </subcellularLocation>
</comment>
<comment type="similarity">
    <text evidence="1">Belongs to the YbaB/EbfC family.</text>
</comment>
<name>Y3743_COLP3</name>
<keyword id="KW-0963">Cytoplasm</keyword>
<keyword id="KW-0238">DNA-binding</keyword>
<protein>
    <recommendedName>
        <fullName evidence="1">Nucleoid-associated protein CPS_3743</fullName>
    </recommendedName>
</protein>
<organism>
    <name type="scientific">Colwellia psychrerythraea (strain 34H / ATCC BAA-681)</name>
    <name type="common">Vibrio psychroerythus</name>
    <dbReference type="NCBI Taxonomy" id="167879"/>
    <lineage>
        <taxon>Bacteria</taxon>
        <taxon>Pseudomonadati</taxon>
        <taxon>Pseudomonadota</taxon>
        <taxon>Gammaproteobacteria</taxon>
        <taxon>Alteromonadales</taxon>
        <taxon>Colwelliaceae</taxon>
        <taxon>Colwellia</taxon>
    </lineage>
</organism>
<dbReference type="EMBL" id="CP000083">
    <property type="protein sequence ID" value="AAZ27428.1"/>
    <property type="molecule type" value="Genomic_DNA"/>
</dbReference>
<dbReference type="RefSeq" id="WP_011044496.1">
    <property type="nucleotide sequence ID" value="NC_003910.7"/>
</dbReference>
<dbReference type="SMR" id="Q47XR0"/>
<dbReference type="STRING" id="167879.CPS_3743"/>
<dbReference type="KEGG" id="cps:CPS_3743"/>
<dbReference type="eggNOG" id="COG0718">
    <property type="taxonomic scope" value="Bacteria"/>
</dbReference>
<dbReference type="HOGENOM" id="CLU_140930_0_0_6"/>
<dbReference type="Proteomes" id="UP000000547">
    <property type="component" value="Chromosome"/>
</dbReference>
<dbReference type="GO" id="GO:0043590">
    <property type="term" value="C:bacterial nucleoid"/>
    <property type="evidence" value="ECO:0007669"/>
    <property type="project" value="UniProtKB-UniRule"/>
</dbReference>
<dbReference type="GO" id="GO:0005829">
    <property type="term" value="C:cytosol"/>
    <property type="evidence" value="ECO:0007669"/>
    <property type="project" value="TreeGrafter"/>
</dbReference>
<dbReference type="GO" id="GO:0003677">
    <property type="term" value="F:DNA binding"/>
    <property type="evidence" value="ECO:0007669"/>
    <property type="project" value="UniProtKB-UniRule"/>
</dbReference>
<dbReference type="FunFam" id="3.30.1310.10:FF:000001">
    <property type="entry name" value="Nucleoid-associated protein YbaB"/>
    <property type="match status" value="1"/>
</dbReference>
<dbReference type="Gene3D" id="3.30.1310.10">
    <property type="entry name" value="Nucleoid-associated protein YbaB-like domain"/>
    <property type="match status" value="1"/>
</dbReference>
<dbReference type="HAMAP" id="MF_00274">
    <property type="entry name" value="DNA_YbaB_EbfC"/>
    <property type="match status" value="1"/>
</dbReference>
<dbReference type="InterPro" id="IPR036894">
    <property type="entry name" value="YbaB-like_sf"/>
</dbReference>
<dbReference type="InterPro" id="IPR004401">
    <property type="entry name" value="YbaB/EbfC"/>
</dbReference>
<dbReference type="NCBIfam" id="TIGR00103">
    <property type="entry name" value="DNA_YbaB_EbfC"/>
    <property type="match status" value="1"/>
</dbReference>
<dbReference type="PANTHER" id="PTHR33449">
    <property type="entry name" value="NUCLEOID-ASSOCIATED PROTEIN YBAB"/>
    <property type="match status" value="1"/>
</dbReference>
<dbReference type="PANTHER" id="PTHR33449:SF1">
    <property type="entry name" value="NUCLEOID-ASSOCIATED PROTEIN YBAB"/>
    <property type="match status" value="1"/>
</dbReference>
<dbReference type="Pfam" id="PF02575">
    <property type="entry name" value="YbaB_DNA_bd"/>
    <property type="match status" value="1"/>
</dbReference>
<dbReference type="PIRSF" id="PIRSF004555">
    <property type="entry name" value="UCP004555"/>
    <property type="match status" value="1"/>
</dbReference>
<dbReference type="SUPFAM" id="SSF82607">
    <property type="entry name" value="YbaB-like"/>
    <property type="match status" value="1"/>
</dbReference>
<gene>
    <name type="ordered locus">CPS_3743</name>
</gene>
<evidence type="ECO:0000255" key="1">
    <source>
        <dbReference type="HAMAP-Rule" id="MF_00274"/>
    </source>
</evidence>
<evidence type="ECO:0000256" key="2">
    <source>
        <dbReference type="SAM" id="MobiDB-lite"/>
    </source>
</evidence>